<accession>O19900</accession>
<dbReference type="EMBL" id="AF022186">
    <property type="protein sequence ID" value="AAB82689.1"/>
    <property type="molecule type" value="Genomic_DNA"/>
</dbReference>
<dbReference type="PIR" id="T11968">
    <property type="entry name" value="T11968"/>
</dbReference>
<dbReference type="RefSeq" id="NP_045072.1">
    <property type="nucleotide sequence ID" value="NC_001840.1"/>
</dbReference>
<dbReference type="SMR" id="O19900"/>
<dbReference type="GeneID" id="800241"/>
<dbReference type="GO" id="GO:0009507">
    <property type="term" value="C:chloroplast"/>
    <property type="evidence" value="ECO:0007669"/>
    <property type="project" value="UniProtKB-SubCell"/>
</dbReference>
<dbReference type="Gene3D" id="1.10.287.670">
    <property type="entry name" value="Phycobilisome degradation protein NblA"/>
    <property type="match status" value="1"/>
</dbReference>
<dbReference type="InterPro" id="IPR007574">
    <property type="entry name" value="NblA"/>
</dbReference>
<dbReference type="InterPro" id="IPR036904">
    <property type="entry name" value="NblA_sf"/>
</dbReference>
<dbReference type="Pfam" id="PF04485">
    <property type="entry name" value="NblA"/>
    <property type="match status" value="1"/>
</dbReference>
<dbReference type="SUPFAM" id="SSF109859">
    <property type="entry name" value="NblA-like"/>
    <property type="match status" value="1"/>
</dbReference>
<protein>
    <recommendedName>
        <fullName>Uncharacterized protein ycf18</fullName>
    </recommendedName>
</protein>
<feature type="chain" id="PRO_0000217316" description="Uncharacterized protein ycf18">
    <location>
        <begin position="1"/>
        <end position="54"/>
    </location>
</feature>
<reference key="1">
    <citation type="journal article" date="2000" name="J. Mol. Evol.">
        <title>The structure and gene repertoire of an ancient red algal plastid genome.</title>
        <authorList>
            <person name="Gloeckner G."/>
            <person name="Rosenthal A."/>
            <person name="Valentin K.-U."/>
        </authorList>
    </citation>
    <scope>NUCLEOTIDE SEQUENCE [LARGE SCALE GENOMIC DNA]</scope>
    <source>
        <strain>RK-1</strain>
    </source>
</reference>
<gene>
    <name type="primary">ycf18</name>
    <name type="synonym">ycf10</name>
</gene>
<sequence length="54" mass="6617">MQSLTLEQEFKLKVYKENLKKLTLKQSQKHLVEVLKQMMLKDNIIKYLIRNSYF</sequence>
<organism>
    <name type="scientific">Cyanidium caldarium</name>
    <name type="common">Red alga</name>
    <dbReference type="NCBI Taxonomy" id="2771"/>
    <lineage>
        <taxon>Eukaryota</taxon>
        <taxon>Rhodophyta</taxon>
        <taxon>Bangiophyceae</taxon>
        <taxon>Cyanidiales</taxon>
        <taxon>Cyanidiaceae</taxon>
        <taxon>Cyanidium</taxon>
    </lineage>
</organism>
<name>YCF18_CYACA</name>
<proteinExistence type="inferred from homology"/>
<evidence type="ECO:0000305" key="1"/>
<keyword id="KW-0150">Chloroplast</keyword>
<keyword id="KW-0934">Plastid</keyword>
<comment type="subcellular location">
    <subcellularLocation>
        <location>Plastid</location>
        <location>Chloroplast</location>
    </subcellularLocation>
</comment>
<comment type="similarity">
    <text evidence="1">Belongs to the ycf18/nblA family.</text>
</comment>
<geneLocation type="chloroplast"/>